<evidence type="ECO:0000250" key="1"/>
<evidence type="ECO:0000255" key="2">
    <source>
        <dbReference type="PROSITE-ProRule" id="PRU00175"/>
    </source>
</evidence>
<evidence type="ECO:0000255" key="3">
    <source>
        <dbReference type="PROSITE-ProRule" id="PRU00631"/>
    </source>
</evidence>
<evidence type="ECO:0000269" key="4">
    <source>
    </source>
</evidence>
<evidence type="ECO:0000269" key="5">
    <source>
    </source>
</evidence>
<evidence type="ECO:0000269" key="6">
    <source>
    </source>
</evidence>
<evidence type="ECO:0000305" key="7"/>
<proteinExistence type="inferred from homology"/>
<name>PG021_ECTVM</name>
<accession>Q85318</accession>
<sequence>MEFDPAKINTSSIDHVTILQYIDEPNDIRLPVCIIRNINNITYFINITKINPDLANQFRAWKKRIAGRDYMTNLSRDTGIQQSKLTETIRNCQKNRNIYGLYIHYNLVINVVIDWITDVIVQSILRGLVNWYIANNTYNPNTPNSTTISELDIIKILDKYEDVYRVSKEKECGICYEVVYSKRLENDRYFGLLDSCNHIFCITCINIWHRTRRETGASDNCPICRTRFRNITMSKFYKLVN</sequence>
<protein>
    <recommendedName>
        <fullName>Host range factor p28</fullName>
        <ecNumber>2.3.2.27</ecNumber>
    </recommendedName>
    <alternativeName>
        <fullName>E3 ubiquitin-protein ligase p28</fullName>
    </alternativeName>
</protein>
<comment type="function">
    <text evidence="4 5 6">RING-finger E3 ubiquitin ligase which catalyzes the formation of both 'Lys-48'- and 'Lys-63'-linked polyubiquitin chains. Plays an important role in virulence by acting as an anti-apoptotic factor.</text>
</comment>
<comment type="catalytic activity">
    <reaction>
        <text>S-ubiquitinyl-[E2 ubiquitin-conjugating enzyme]-L-cysteine + [acceptor protein]-L-lysine = [E2 ubiquitin-conjugating enzyme]-L-cysteine + N(6)-ubiquitinyl-[acceptor protein]-L-lysine.</text>
        <dbReference type="EC" id="2.3.2.27"/>
    </reaction>
</comment>
<comment type="subcellular location">
    <subcellularLocation>
        <location evidence="6">Host cytoplasm</location>
    </subcellularLocation>
    <text>Localizes to viral factories, the sites of virus replication.</text>
</comment>
<comment type="domain">
    <text evidence="1">The RING-type zinc finger domain is required for E3 ligase activity.</text>
</comment>
<comment type="similarity">
    <text evidence="7">Belongs to the orthopoxvirus OPG021 family.</text>
</comment>
<organism>
    <name type="scientific">Ectromelia virus (strain Moscow)</name>
    <name type="common">ECTV</name>
    <name type="synonym">Mousepox virus</name>
    <dbReference type="NCBI Taxonomy" id="265874"/>
    <lineage>
        <taxon>Viruses</taxon>
        <taxon>Varidnaviria</taxon>
        <taxon>Bamfordvirae</taxon>
        <taxon>Nucleocytoviricota</taxon>
        <taxon>Pokkesviricetes</taxon>
        <taxon>Chitovirales</taxon>
        <taxon>Poxviridae</taxon>
        <taxon>Chordopoxvirinae</taxon>
        <taxon>Orthopoxvirus</taxon>
        <taxon>Ectromelia virus</taxon>
    </lineage>
</organism>
<reference key="1">
    <citation type="submission" date="2002-06" db="EMBL/GenBank/DDBJ databases">
        <title>The genomic sequence of ectromelia virus, the causative agent of mousepox.</title>
        <authorList>
            <person name="Chen N."/>
            <person name="Danila M.I."/>
            <person name="Feng Z."/>
            <person name="Buller M.L."/>
            <person name="Wang C."/>
            <person name="Han X."/>
            <person name="Lefkowitz E."/>
            <person name="Upton C."/>
        </authorList>
    </citation>
    <scope>NUCLEOTIDE SEQUENCE [LARGE SCALE GENOMIC DNA]</scope>
</reference>
<reference key="2">
    <citation type="journal article" date="2000" name="J. Gen. Virol.">
        <title>Ectromelia virus virulence factor p28 acts upstream of caspase-3 in response to UV light-induced apoptosis.</title>
        <authorList>
            <person name="Brick D.J."/>
            <person name="Burke R.D."/>
            <person name="Minkley A.A."/>
            <person name="Upton C."/>
        </authorList>
    </citation>
    <scope>FUNCTION</scope>
</reference>
<reference key="3">
    <citation type="journal article" date="2004" name="J. Biol. Chem.">
        <title>The poxvirus p28 virulence factor is an E3 ubiquitin ligase.</title>
        <authorList>
            <person name="Huang J."/>
            <person name="Huang Q."/>
            <person name="Zhou X."/>
            <person name="Shen M.M."/>
            <person name="Yen A."/>
            <person name="Yu S.X."/>
            <person name="Dong G."/>
            <person name="Qu K."/>
            <person name="Huang P."/>
            <person name="Anderson E.M."/>
            <person name="Daniel-Issakani S."/>
            <person name="Buller R.M."/>
            <person name="Payan D.G."/>
            <person name="Lu H.H."/>
        </authorList>
    </citation>
    <scope>FUNCTION</scope>
</reference>
<reference key="4">
    <citation type="journal article" date="2005" name="J. Virol.">
        <title>The poxviral RING protein p28 is a ubiquitin ligase that targets ubiquitin to viral replication factories.</title>
        <authorList>
            <person name="Nerenberg B.T."/>
            <person name="Taylor J."/>
            <person name="Bartee E."/>
            <person name="Gouveia K."/>
            <person name="Barry M."/>
            <person name="Fruh K."/>
        </authorList>
    </citation>
    <scope>FUNCTION</scope>
    <scope>SUBCELLULAR LOCATION</scope>
</reference>
<organismHost>
    <name type="scientific">Mus musculus</name>
    <name type="common">Mouse</name>
    <dbReference type="NCBI Taxonomy" id="10090"/>
</organismHost>
<gene>
    <name type="primary">OPG021</name>
    <name type="synonym">p28</name>
    <name type="ordered locus">EVM1012</name>
</gene>
<keyword id="KW-1035">Host cytoplasm</keyword>
<keyword id="KW-0945">Host-virus interaction</keyword>
<keyword id="KW-0479">Metal-binding</keyword>
<keyword id="KW-1119">Modulation of host cell apoptosis by virus</keyword>
<keyword id="KW-1128">Modulation of host ubiquitin pathway by viral E3 ligase</keyword>
<keyword id="KW-1130">Modulation of host ubiquitin pathway by virus</keyword>
<keyword id="KW-0808">Transferase</keyword>
<keyword id="KW-0833">Ubl conjugation pathway</keyword>
<keyword id="KW-0862">Zinc</keyword>
<keyword id="KW-0863">Zinc-finger</keyword>
<dbReference type="EC" id="2.3.2.27"/>
<dbReference type="EMBL" id="U01161">
    <property type="protein sequence ID" value="AAA16258.1"/>
    <property type="molecule type" value="Unassigned_DNA"/>
</dbReference>
<dbReference type="EMBL" id="AF012825">
    <property type="protein sequence ID" value="AAM92318.1"/>
    <property type="molecule type" value="Genomic_DNA"/>
</dbReference>
<dbReference type="PIR" id="B49276">
    <property type="entry name" value="B49276"/>
</dbReference>
<dbReference type="SMR" id="Q85318"/>
<dbReference type="KEGG" id="vg:1494459"/>
<dbReference type="Proteomes" id="UP000172110">
    <property type="component" value="Segment"/>
</dbReference>
<dbReference type="GO" id="GO:0030430">
    <property type="term" value="C:host cell cytoplasm"/>
    <property type="evidence" value="ECO:0007669"/>
    <property type="project" value="UniProtKB-SubCell"/>
</dbReference>
<dbReference type="GO" id="GO:0016881">
    <property type="term" value="F:acid-amino acid ligase activity"/>
    <property type="evidence" value="ECO:0007669"/>
    <property type="project" value="InterPro"/>
</dbReference>
<dbReference type="GO" id="GO:0061630">
    <property type="term" value="F:ubiquitin protein ligase activity"/>
    <property type="evidence" value="ECO:0007669"/>
    <property type="project" value="InterPro"/>
</dbReference>
<dbReference type="GO" id="GO:0008270">
    <property type="term" value="F:zinc ion binding"/>
    <property type="evidence" value="ECO:0007669"/>
    <property type="project" value="UniProtKB-KW"/>
</dbReference>
<dbReference type="GO" id="GO:0000209">
    <property type="term" value="P:protein polyubiquitination"/>
    <property type="evidence" value="ECO:0007669"/>
    <property type="project" value="InterPro"/>
</dbReference>
<dbReference type="GO" id="GO:0052150">
    <property type="term" value="P:symbiont-mediated perturbation of host apoptosis"/>
    <property type="evidence" value="ECO:0007669"/>
    <property type="project" value="UniProtKB-KW"/>
</dbReference>
<dbReference type="GO" id="GO:0039648">
    <property type="term" value="P:symbiont-mediated perturbation of host ubiquitin-like protein modification"/>
    <property type="evidence" value="ECO:0007669"/>
    <property type="project" value="UniProtKB-KW"/>
</dbReference>
<dbReference type="Gene3D" id="3.30.40.10">
    <property type="entry name" value="Zinc/RING finger domain, C3HC4 (zinc finger)"/>
    <property type="match status" value="1"/>
</dbReference>
<dbReference type="InterPro" id="IPR016398">
    <property type="entry name" value="E3_ubiquitin-prot_ligase_p28"/>
</dbReference>
<dbReference type="InterPro" id="IPR018004">
    <property type="entry name" value="KilA/APSES_HTH"/>
</dbReference>
<dbReference type="InterPro" id="IPR017880">
    <property type="entry name" value="KilA_N"/>
</dbReference>
<dbReference type="InterPro" id="IPR045072">
    <property type="entry name" value="MKRN-like"/>
</dbReference>
<dbReference type="InterPro" id="IPR001841">
    <property type="entry name" value="Znf_RING"/>
</dbReference>
<dbReference type="InterPro" id="IPR013083">
    <property type="entry name" value="Znf_RING/FYVE/PHD"/>
</dbReference>
<dbReference type="InterPro" id="IPR017907">
    <property type="entry name" value="Znf_RING_CS"/>
</dbReference>
<dbReference type="PANTHER" id="PTHR11224:SF10">
    <property type="entry name" value="IP09428P-RELATED"/>
    <property type="match status" value="1"/>
</dbReference>
<dbReference type="PANTHER" id="PTHR11224">
    <property type="entry name" value="MAKORIN-RELATED"/>
    <property type="match status" value="1"/>
</dbReference>
<dbReference type="Pfam" id="PF04383">
    <property type="entry name" value="KilA-N"/>
    <property type="match status" value="1"/>
</dbReference>
<dbReference type="Pfam" id="PF13639">
    <property type="entry name" value="zf-RING_2"/>
    <property type="match status" value="1"/>
</dbReference>
<dbReference type="PIRSF" id="PIRSF003775">
    <property type="entry name" value="E3_ubiquit_lig_p28"/>
    <property type="match status" value="1"/>
</dbReference>
<dbReference type="SMART" id="SM00184">
    <property type="entry name" value="RING"/>
    <property type="match status" value="1"/>
</dbReference>
<dbReference type="SUPFAM" id="SSF57850">
    <property type="entry name" value="RING/U-box"/>
    <property type="match status" value="1"/>
</dbReference>
<dbReference type="PROSITE" id="PS51301">
    <property type="entry name" value="KILA_N"/>
    <property type="match status" value="1"/>
</dbReference>
<dbReference type="PROSITE" id="PS00518">
    <property type="entry name" value="ZF_RING_1"/>
    <property type="match status" value="1"/>
</dbReference>
<dbReference type="PROSITE" id="PS50089">
    <property type="entry name" value="ZF_RING_2"/>
    <property type="match status" value="1"/>
</dbReference>
<feature type="chain" id="PRO_0000395986" description="Host range factor p28">
    <location>
        <begin position="1"/>
        <end position="241"/>
    </location>
</feature>
<feature type="domain" description="KilA-N" evidence="3">
    <location>
        <begin position="21"/>
        <end position="131"/>
    </location>
</feature>
<feature type="zinc finger region" description="RING-type" evidence="2">
    <location>
        <begin position="172"/>
        <end position="225"/>
    </location>
</feature>